<feature type="chain" id="PRO_0000381591" description="Biotin synthase">
    <location>
        <begin position="1"/>
        <end position="322"/>
    </location>
</feature>
<feature type="domain" description="Radical SAM core" evidence="2">
    <location>
        <begin position="39"/>
        <end position="266"/>
    </location>
</feature>
<feature type="binding site" evidence="1">
    <location>
        <position position="54"/>
    </location>
    <ligand>
        <name>[4Fe-4S] cluster</name>
        <dbReference type="ChEBI" id="CHEBI:49883"/>
        <note>4Fe-4S-S-AdoMet</note>
    </ligand>
</feature>
<feature type="binding site" evidence="1">
    <location>
        <position position="58"/>
    </location>
    <ligand>
        <name>[4Fe-4S] cluster</name>
        <dbReference type="ChEBI" id="CHEBI:49883"/>
        <note>4Fe-4S-S-AdoMet</note>
    </ligand>
</feature>
<feature type="binding site" evidence="1">
    <location>
        <position position="61"/>
    </location>
    <ligand>
        <name>[4Fe-4S] cluster</name>
        <dbReference type="ChEBI" id="CHEBI:49883"/>
        <note>4Fe-4S-S-AdoMet</note>
    </ligand>
</feature>
<feature type="binding site" evidence="1">
    <location>
        <position position="98"/>
    </location>
    <ligand>
        <name>[2Fe-2S] cluster</name>
        <dbReference type="ChEBI" id="CHEBI:190135"/>
    </ligand>
</feature>
<feature type="binding site" evidence="1">
    <location>
        <position position="129"/>
    </location>
    <ligand>
        <name>[2Fe-2S] cluster</name>
        <dbReference type="ChEBI" id="CHEBI:190135"/>
    </ligand>
</feature>
<feature type="binding site" evidence="1">
    <location>
        <position position="189"/>
    </location>
    <ligand>
        <name>[2Fe-2S] cluster</name>
        <dbReference type="ChEBI" id="CHEBI:190135"/>
    </ligand>
</feature>
<feature type="binding site" evidence="1">
    <location>
        <position position="261"/>
    </location>
    <ligand>
        <name>[2Fe-2S] cluster</name>
        <dbReference type="ChEBI" id="CHEBI:190135"/>
    </ligand>
</feature>
<name>BIOB_RUTMC</name>
<evidence type="ECO:0000255" key="1">
    <source>
        <dbReference type="HAMAP-Rule" id="MF_01694"/>
    </source>
</evidence>
<evidence type="ECO:0000255" key="2">
    <source>
        <dbReference type="PROSITE-ProRule" id="PRU01266"/>
    </source>
</evidence>
<reference key="1">
    <citation type="journal article" date="2007" name="Science">
        <title>The Calyptogena magnifica chemoautotrophic symbiont genome.</title>
        <authorList>
            <person name="Newton I.L.G."/>
            <person name="Woyke T."/>
            <person name="Auchtung T.A."/>
            <person name="Dilly G.F."/>
            <person name="Dutton R.J."/>
            <person name="Fisher M.C."/>
            <person name="Fontanez K.M."/>
            <person name="Lau E."/>
            <person name="Stewart F.J."/>
            <person name="Richardson P.M."/>
            <person name="Barry K.W."/>
            <person name="Saunders E."/>
            <person name="Detter J.C."/>
            <person name="Wu D."/>
            <person name="Eisen J.A."/>
            <person name="Cavanaugh C.M."/>
        </authorList>
    </citation>
    <scope>NUCLEOTIDE SEQUENCE [LARGE SCALE GENOMIC DNA]</scope>
</reference>
<organism>
    <name type="scientific">Ruthia magnifica subsp. Calyptogena magnifica</name>
    <dbReference type="NCBI Taxonomy" id="413404"/>
    <lineage>
        <taxon>Bacteria</taxon>
        <taxon>Pseudomonadati</taxon>
        <taxon>Pseudomonadota</taxon>
        <taxon>Gammaproteobacteria</taxon>
        <taxon>Candidatus Pseudothioglobaceae</taxon>
        <taxon>Candidatus Ruthturnera</taxon>
    </lineage>
</organism>
<keyword id="KW-0001">2Fe-2S</keyword>
<keyword id="KW-0004">4Fe-4S</keyword>
<keyword id="KW-0093">Biotin biosynthesis</keyword>
<keyword id="KW-0408">Iron</keyword>
<keyword id="KW-0411">Iron-sulfur</keyword>
<keyword id="KW-0479">Metal-binding</keyword>
<keyword id="KW-0949">S-adenosyl-L-methionine</keyword>
<keyword id="KW-0808">Transferase</keyword>
<sequence>MEELRNDWTLKEVEILFSLPFNDLLFQAHRIHRQNFDPNQIQVSSLLNIKTGACPEDCSYCSQSSKYDTGLEREKLMEIDLVLQQAKEAQDIGATRFCMGAAWRNPTDKSLAKVILMIQGVKTMGMETCVTLGMLTQEQAFILKEAGLDYYNHNIDTSKEHYSNVVTTRNFQDRLNTLESVQNANIHVCSGGILGLDESQTDRASMLRSLSNLRTHPDSVPFNLLVPIPGTPFENIEPPTESEFVRTIAVARIMMPKSVVRLSAGRTKMGEAMQALCFFAGANSIFYGEQLLTTDNPNINSDKDLFARLGINQKKVNNLQSV</sequence>
<gene>
    <name evidence="1" type="primary">bioB</name>
    <name type="ordered locus">Rmag_0499</name>
</gene>
<protein>
    <recommendedName>
        <fullName evidence="1">Biotin synthase</fullName>
        <ecNumber evidence="1">2.8.1.6</ecNumber>
    </recommendedName>
</protein>
<dbReference type="EC" id="2.8.1.6" evidence="1"/>
<dbReference type="EMBL" id="CP000488">
    <property type="protein sequence ID" value="ABL02254.1"/>
    <property type="molecule type" value="Genomic_DNA"/>
</dbReference>
<dbReference type="RefSeq" id="WP_011737879.1">
    <property type="nucleotide sequence ID" value="NC_008610.1"/>
</dbReference>
<dbReference type="SMR" id="A1AWE7"/>
<dbReference type="STRING" id="413404.Rmag_0499"/>
<dbReference type="KEGG" id="rma:Rmag_0499"/>
<dbReference type="eggNOG" id="COG0502">
    <property type="taxonomic scope" value="Bacteria"/>
</dbReference>
<dbReference type="HOGENOM" id="CLU_033172_1_2_6"/>
<dbReference type="OrthoDB" id="9786826at2"/>
<dbReference type="UniPathway" id="UPA00078">
    <property type="reaction ID" value="UER00162"/>
</dbReference>
<dbReference type="Proteomes" id="UP000002587">
    <property type="component" value="Chromosome"/>
</dbReference>
<dbReference type="GO" id="GO:0051537">
    <property type="term" value="F:2 iron, 2 sulfur cluster binding"/>
    <property type="evidence" value="ECO:0007669"/>
    <property type="project" value="UniProtKB-KW"/>
</dbReference>
<dbReference type="GO" id="GO:0051539">
    <property type="term" value="F:4 iron, 4 sulfur cluster binding"/>
    <property type="evidence" value="ECO:0007669"/>
    <property type="project" value="UniProtKB-KW"/>
</dbReference>
<dbReference type="GO" id="GO:0004076">
    <property type="term" value="F:biotin synthase activity"/>
    <property type="evidence" value="ECO:0007669"/>
    <property type="project" value="UniProtKB-UniRule"/>
</dbReference>
<dbReference type="GO" id="GO:0005506">
    <property type="term" value="F:iron ion binding"/>
    <property type="evidence" value="ECO:0007669"/>
    <property type="project" value="UniProtKB-UniRule"/>
</dbReference>
<dbReference type="GO" id="GO:0009102">
    <property type="term" value="P:biotin biosynthetic process"/>
    <property type="evidence" value="ECO:0007669"/>
    <property type="project" value="UniProtKB-UniRule"/>
</dbReference>
<dbReference type="CDD" id="cd01335">
    <property type="entry name" value="Radical_SAM"/>
    <property type="match status" value="1"/>
</dbReference>
<dbReference type="FunFam" id="3.20.20.70:FF:000011">
    <property type="entry name" value="Biotin synthase"/>
    <property type="match status" value="1"/>
</dbReference>
<dbReference type="Gene3D" id="3.20.20.70">
    <property type="entry name" value="Aldolase class I"/>
    <property type="match status" value="1"/>
</dbReference>
<dbReference type="HAMAP" id="MF_01694">
    <property type="entry name" value="BioB"/>
    <property type="match status" value="1"/>
</dbReference>
<dbReference type="InterPro" id="IPR013785">
    <property type="entry name" value="Aldolase_TIM"/>
</dbReference>
<dbReference type="InterPro" id="IPR010722">
    <property type="entry name" value="BATS_dom"/>
</dbReference>
<dbReference type="InterPro" id="IPR002684">
    <property type="entry name" value="Biotin_synth/BioAB"/>
</dbReference>
<dbReference type="InterPro" id="IPR024177">
    <property type="entry name" value="Biotin_synthase"/>
</dbReference>
<dbReference type="InterPro" id="IPR006638">
    <property type="entry name" value="Elp3/MiaA/NifB-like_rSAM"/>
</dbReference>
<dbReference type="InterPro" id="IPR007197">
    <property type="entry name" value="rSAM"/>
</dbReference>
<dbReference type="NCBIfam" id="TIGR00433">
    <property type="entry name" value="bioB"/>
    <property type="match status" value="1"/>
</dbReference>
<dbReference type="PANTHER" id="PTHR22976">
    <property type="entry name" value="BIOTIN SYNTHASE"/>
    <property type="match status" value="1"/>
</dbReference>
<dbReference type="PANTHER" id="PTHR22976:SF2">
    <property type="entry name" value="BIOTIN SYNTHASE, MITOCHONDRIAL"/>
    <property type="match status" value="1"/>
</dbReference>
<dbReference type="Pfam" id="PF06968">
    <property type="entry name" value="BATS"/>
    <property type="match status" value="1"/>
</dbReference>
<dbReference type="Pfam" id="PF04055">
    <property type="entry name" value="Radical_SAM"/>
    <property type="match status" value="1"/>
</dbReference>
<dbReference type="PIRSF" id="PIRSF001619">
    <property type="entry name" value="Biotin_synth"/>
    <property type="match status" value="1"/>
</dbReference>
<dbReference type="SFLD" id="SFLDF00272">
    <property type="entry name" value="biotin_synthase"/>
    <property type="match status" value="1"/>
</dbReference>
<dbReference type="SFLD" id="SFLDG01278">
    <property type="entry name" value="biotin_synthase_like"/>
    <property type="match status" value="1"/>
</dbReference>
<dbReference type="SMART" id="SM00876">
    <property type="entry name" value="BATS"/>
    <property type="match status" value="1"/>
</dbReference>
<dbReference type="SMART" id="SM00729">
    <property type="entry name" value="Elp3"/>
    <property type="match status" value="1"/>
</dbReference>
<dbReference type="SUPFAM" id="SSF102114">
    <property type="entry name" value="Radical SAM enzymes"/>
    <property type="match status" value="1"/>
</dbReference>
<dbReference type="PROSITE" id="PS51918">
    <property type="entry name" value="RADICAL_SAM"/>
    <property type="match status" value="1"/>
</dbReference>
<comment type="function">
    <text evidence="1">Catalyzes the conversion of dethiobiotin (DTB) to biotin by the insertion of a sulfur atom into dethiobiotin via a radical-based mechanism.</text>
</comment>
<comment type="catalytic activity">
    <reaction evidence="1">
        <text>(4R,5S)-dethiobiotin + (sulfur carrier)-SH + 2 reduced [2Fe-2S]-[ferredoxin] + 2 S-adenosyl-L-methionine = (sulfur carrier)-H + biotin + 2 5'-deoxyadenosine + 2 L-methionine + 2 oxidized [2Fe-2S]-[ferredoxin]</text>
        <dbReference type="Rhea" id="RHEA:22060"/>
        <dbReference type="Rhea" id="RHEA-COMP:10000"/>
        <dbReference type="Rhea" id="RHEA-COMP:10001"/>
        <dbReference type="Rhea" id="RHEA-COMP:14737"/>
        <dbReference type="Rhea" id="RHEA-COMP:14739"/>
        <dbReference type="ChEBI" id="CHEBI:17319"/>
        <dbReference type="ChEBI" id="CHEBI:29917"/>
        <dbReference type="ChEBI" id="CHEBI:33737"/>
        <dbReference type="ChEBI" id="CHEBI:33738"/>
        <dbReference type="ChEBI" id="CHEBI:57586"/>
        <dbReference type="ChEBI" id="CHEBI:57844"/>
        <dbReference type="ChEBI" id="CHEBI:59789"/>
        <dbReference type="ChEBI" id="CHEBI:64428"/>
        <dbReference type="ChEBI" id="CHEBI:149473"/>
        <dbReference type="EC" id="2.8.1.6"/>
    </reaction>
</comment>
<comment type="cofactor">
    <cofactor evidence="1">
        <name>[4Fe-4S] cluster</name>
        <dbReference type="ChEBI" id="CHEBI:49883"/>
    </cofactor>
    <text evidence="1">Binds 1 [4Fe-4S] cluster. The cluster is coordinated with 3 cysteines and an exchangeable S-adenosyl-L-methionine.</text>
</comment>
<comment type="cofactor">
    <cofactor evidence="1">
        <name>[2Fe-2S] cluster</name>
        <dbReference type="ChEBI" id="CHEBI:190135"/>
    </cofactor>
    <text evidence="1">Binds 1 [2Fe-2S] cluster. The cluster is coordinated with 3 cysteines and 1 arginine.</text>
</comment>
<comment type="pathway">
    <text evidence="1">Cofactor biosynthesis; biotin biosynthesis; biotin from 7,8-diaminononanoate: step 2/2.</text>
</comment>
<comment type="subunit">
    <text evidence="1">Homodimer.</text>
</comment>
<comment type="similarity">
    <text evidence="1">Belongs to the radical SAM superfamily. Biotin synthase family.</text>
</comment>
<accession>A1AWE7</accession>
<proteinExistence type="inferred from homology"/>